<dbReference type="EC" id="1.11.2.-" evidence="1"/>
<dbReference type="EMBL" id="BX284605">
    <property type="protein sequence ID" value="CCD71290.1"/>
    <property type="molecule type" value="Genomic_DNA"/>
</dbReference>
<dbReference type="RefSeq" id="NP_505188.3">
    <property type="nucleotide sequence ID" value="NM_072787.4"/>
</dbReference>
<dbReference type="SMR" id="Q1ENI8"/>
<dbReference type="BioGRID" id="56017">
    <property type="interactions" value="3"/>
</dbReference>
<dbReference type="FunCoup" id="Q1ENI8">
    <property type="interactions" value="330"/>
</dbReference>
<dbReference type="STRING" id="6239.ZK994.3.1"/>
<dbReference type="PeroxiBase" id="3359">
    <property type="entry name" value="CelPxd01"/>
</dbReference>
<dbReference type="GlyCosmos" id="Q1ENI8">
    <property type="glycosylation" value="5 sites, No reported glycans"/>
</dbReference>
<dbReference type="iPTMnet" id="Q1ENI8"/>
<dbReference type="PaxDb" id="6239-ZK994.3"/>
<dbReference type="PeptideAtlas" id="Q1ENI8"/>
<dbReference type="EnsemblMetazoa" id="ZK994.3.1">
    <property type="protein sequence ID" value="ZK994.3.1"/>
    <property type="gene ID" value="WBGene00004256"/>
</dbReference>
<dbReference type="GeneID" id="191484"/>
<dbReference type="KEGG" id="cel:CELE_ZK994.3"/>
<dbReference type="UCSC" id="ZK994.3">
    <property type="organism name" value="c. elegans"/>
</dbReference>
<dbReference type="AGR" id="WB:WBGene00004256"/>
<dbReference type="CTD" id="191484"/>
<dbReference type="WormBase" id="ZK994.3">
    <property type="protein sequence ID" value="CE40298"/>
    <property type="gene ID" value="WBGene00004256"/>
    <property type="gene designation" value="pxn-1"/>
</dbReference>
<dbReference type="eggNOG" id="KOG0619">
    <property type="taxonomic scope" value="Eukaryota"/>
</dbReference>
<dbReference type="eggNOG" id="KOG2408">
    <property type="taxonomic scope" value="Eukaryota"/>
</dbReference>
<dbReference type="GeneTree" id="ENSGT00940000168557"/>
<dbReference type="HOGENOM" id="CLU_006087_0_0_1"/>
<dbReference type="InParanoid" id="Q1ENI8"/>
<dbReference type="OMA" id="NCDCRWL"/>
<dbReference type="OrthoDB" id="823504at2759"/>
<dbReference type="PhylomeDB" id="Q1ENI8"/>
<dbReference type="Reactome" id="R-CEL-209968">
    <property type="pathway name" value="Thyroxine biosynthesis"/>
</dbReference>
<dbReference type="Reactome" id="R-CEL-6798695">
    <property type="pathway name" value="Neutrophil degranulation"/>
</dbReference>
<dbReference type="Reactome" id="R-CEL-8941413">
    <property type="pathway name" value="Events associated with phagocytolytic activity of PMN cells"/>
</dbReference>
<dbReference type="PRO" id="PR:Q1ENI8"/>
<dbReference type="Proteomes" id="UP000001940">
    <property type="component" value="Chromosome V"/>
</dbReference>
<dbReference type="Bgee" id="WBGene00004256">
    <property type="expression patterns" value="Expressed in larva and 3 other cell types or tissues"/>
</dbReference>
<dbReference type="GO" id="GO:0005604">
    <property type="term" value="C:basement membrane"/>
    <property type="evidence" value="ECO:0000314"/>
    <property type="project" value="WormBase"/>
</dbReference>
<dbReference type="GO" id="GO:0031012">
    <property type="term" value="C:extracellular matrix"/>
    <property type="evidence" value="ECO:0000314"/>
    <property type="project" value="UniProtKB"/>
</dbReference>
<dbReference type="GO" id="GO:0005615">
    <property type="term" value="C:extracellular space"/>
    <property type="evidence" value="ECO:0000318"/>
    <property type="project" value="GO_Central"/>
</dbReference>
<dbReference type="GO" id="GO:0020037">
    <property type="term" value="F:heme binding"/>
    <property type="evidence" value="ECO:0007669"/>
    <property type="project" value="InterPro"/>
</dbReference>
<dbReference type="GO" id="GO:0140825">
    <property type="term" value="F:lactoperoxidase activity"/>
    <property type="evidence" value="ECO:0007669"/>
    <property type="project" value="UniProtKB-EC"/>
</dbReference>
<dbReference type="GO" id="GO:0046872">
    <property type="term" value="F:metal ion binding"/>
    <property type="evidence" value="ECO:0007669"/>
    <property type="project" value="UniProtKB-KW"/>
</dbReference>
<dbReference type="GO" id="GO:0004601">
    <property type="term" value="F:peroxidase activity"/>
    <property type="evidence" value="ECO:0000318"/>
    <property type="project" value="GO_Central"/>
</dbReference>
<dbReference type="GO" id="GO:0042744">
    <property type="term" value="P:hydrogen peroxide catabolic process"/>
    <property type="evidence" value="ECO:0007669"/>
    <property type="project" value="UniProtKB-KW"/>
</dbReference>
<dbReference type="GO" id="GO:0016203">
    <property type="term" value="P:muscle attachment"/>
    <property type="evidence" value="ECO:0000315"/>
    <property type="project" value="UniProtKB"/>
</dbReference>
<dbReference type="GO" id="GO:1902669">
    <property type="term" value="P:positive regulation of axon guidance"/>
    <property type="evidence" value="ECO:0000315"/>
    <property type="project" value="UniProtKB"/>
</dbReference>
<dbReference type="GO" id="GO:0006979">
    <property type="term" value="P:response to oxidative stress"/>
    <property type="evidence" value="ECO:0007669"/>
    <property type="project" value="InterPro"/>
</dbReference>
<dbReference type="CDD" id="cd09826">
    <property type="entry name" value="peroxidasin_like"/>
    <property type="match status" value="1"/>
</dbReference>
<dbReference type="FunFam" id="2.60.40.10:FF:001895">
    <property type="entry name" value="PeroXidasiN (Drosophila peroxidase) homolog"/>
    <property type="match status" value="1"/>
</dbReference>
<dbReference type="FunFam" id="1.10.640.10:FF:000001">
    <property type="entry name" value="Peroxidasin homolog"/>
    <property type="match status" value="1"/>
</dbReference>
<dbReference type="FunFam" id="3.80.10.10:FF:000928">
    <property type="entry name" value="Peroxidasin homolog"/>
    <property type="match status" value="1"/>
</dbReference>
<dbReference type="FunFam" id="2.60.40.10:FF:000299">
    <property type="entry name" value="protogenin isoform X2"/>
    <property type="match status" value="1"/>
</dbReference>
<dbReference type="Gene3D" id="1.10.640.10">
    <property type="entry name" value="Haem peroxidase domain superfamily, animal type"/>
    <property type="match status" value="1"/>
</dbReference>
<dbReference type="Gene3D" id="2.60.40.10">
    <property type="entry name" value="Immunoglobulins"/>
    <property type="match status" value="2"/>
</dbReference>
<dbReference type="Gene3D" id="3.80.10.10">
    <property type="entry name" value="Ribonuclease Inhibitor"/>
    <property type="match status" value="2"/>
</dbReference>
<dbReference type="InterPro" id="IPR000483">
    <property type="entry name" value="Cys-rich_flank_reg_C"/>
</dbReference>
<dbReference type="InterPro" id="IPR019791">
    <property type="entry name" value="Haem_peroxidase_animal"/>
</dbReference>
<dbReference type="InterPro" id="IPR010255">
    <property type="entry name" value="Haem_peroxidase_sf"/>
</dbReference>
<dbReference type="InterPro" id="IPR037120">
    <property type="entry name" value="Haem_peroxidase_sf_animal"/>
</dbReference>
<dbReference type="InterPro" id="IPR007110">
    <property type="entry name" value="Ig-like_dom"/>
</dbReference>
<dbReference type="InterPro" id="IPR036179">
    <property type="entry name" value="Ig-like_dom_sf"/>
</dbReference>
<dbReference type="InterPro" id="IPR013783">
    <property type="entry name" value="Ig-like_fold"/>
</dbReference>
<dbReference type="InterPro" id="IPR013098">
    <property type="entry name" value="Ig_I-set"/>
</dbReference>
<dbReference type="InterPro" id="IPR003599">
    <property type="entry name" value="Ig_sub"/>
</dbReference>
<dbReference type="InterPro" id="IPR003598">
    <property type="entry name" value="Ig_sub2"/>
</dbReference>
<dbReference type="InterPro" id="IPR001611">
    <property type="entry name" value="Leu-rich_rpt"/>
</dbReference>
<dbReference type="InterPro" id="IPR003591">
    <property type="entry name" value="Leu-rich_rpt_typical-subtyp"/>
</dbReference>
<dbReference type="InterPro" id="IPR032675">
    <property type="entry name" value="LRR_dom_sf"/>
</dbReference>
<dbReference type="InterPro" id="IPR000372">
    <property type="entry name" value="LRRNT"/>
</dbReference>
<dbReference type="InterPro" id="IPR034824">
    <property type="entry name" value="Peroxidasin_peroxidase"/>
</dbReference>
<dbReference type="PANTHER" id="PTHR11475">
    <property type="entry name" value="OXIDASE/PEROXIDASE"/>
    <property type="match status" value="1"/>
</dbReference>
<dbReference type="PANTHER" id="PTHR11475:SF58">
    <property type="entry name" value="PEROXIDASIN"/>
    <property type="match status" value="1"/>
</dbReference>
<dbReference type="Pfam" id="PF03098">
    <property type="entry name" value="An_peroxidase"/>
    <property type="match status" value="1"/>
</dbReference>
<dbReference type="Pfam" id="PF07679">
    <property type="entry name" value="I-set"/>
    <property type="match status" value="2"/>
</dbReference>
<dbReference type="Pfam" id="PF13855">
    <property type="entry name" value="LRR_8"/>
    <property type="match status" value="2"/>
</dbReference>
<dbReference type="Pfam" id="PF01462">
    <property type="entry name" value="LRRNT"/>
    <property type="match status" value="1"/>
</dbReference>
<dbReference type="PRINTS" id="PR00457">
    <property type="entry name" value="ANPEROXIDASE"/>
</dbReference>
<dbReference type="SMART" id="SM00409">
    <property type="entry name" value="IG"/>
    <property type="match status" value="2"/>
</dbReference>
<dbReference type="SMART" id="SM00408">
    <property type="entry name" value="IGc2"/>
    <property type="match status" value="2"/>
</dbReference>
<dbReference type="SMART" id="SM00369">
    <property type="entry name" value="LRR_TYP"/>
    <property type="match status" value="3"/>
</dbReference>
<dbReference type="SMART" id="SM00082">
    <property type="entry name" value="LRRCT"/>
    <property type="match status" value="1"/>
</dbReference>
<dbReference type="SMART" id="SM00013">
    <property type="entry name" value="LRRNT"/>
    <property type="match status" value="1"/>
</dbReference>
<dbReference type="SUPFAM" id="SSF48113">
    <property type="entry name" value="Heme-dependent peroxidases"/>
    <property type="match status" value="1"/>
</dbReference>
<dbReference type="SUPFAM" id="SSF48726">
    <property type="entry name" value="Immunoglobulin"/>
    <property type="match status" value="2"/>
</dbReference>
<dbReference type="SUPFAM" id="SSF52058">
    <property type="entry name" value="L domain-like"/>
    <property type="match status" value="1"/>
</dbReference>
<dbReference type="PROSITE" id="PS50835">
    <property type="entry name" value="IG_LIKE"/>
    <property type="match status" value="2"/>
</dbReference>
<dbReference type="PROSITE" id="PS50292">
    <property type="entry name" value="PEROXIDASE_3"/>
    <property type="match status" value="1"/>
</dbReference>
<gene>
    <name evidence="12" type="primary">pxn-1</name>
    <name evidence="12" type="ORF">ZK994.3</name>
</gene>
<organism>
    <name type="scientific">Caenorhabditis elegans</name>
    <dbReference type="NCBI Taxonomy" id="6239"/>
    <lineage>
        <taxon>Eukaryota</taxon>
        <taxon>Metazoa</taxon>
        <taxon>Ecdysozoa</taxon>
        <taxon>Nematoda</taxon>
        <taxon>Chromadorea</taxon>
        <taxon>Rhabditida</taxon>
        <taxon>Rhabditina</taxon>
        <taxon>Rhabditomorpha</taxon>
        <taxon>Rhabditoidea</taxon>
        <taxon>Rhabditidae</taxon>
        <taxon>Peloderinae</taxon>
        <taxon>Caenorhabditis</taxon>
    </lineage>
</organism>
<name>PXDN1_CAEEL</name>
<reference key="1">
    <citation type="journal article" date="1998" name="Science">
        <title>Genome sequence of the nematode C. elegans: a platform for investigating biology.</title>
        <authorList>
            <consortium name="The C. elegans sequencing consortium"/>
        </authorList>
    </citation>
    <scope>NUCLEOTIDE SEQUENCE [LARGE SCALE GENOMIC DNA]</scope>
    <source>
        <strain>Bristol N2</strain>
    </source>
</reference>
<reference key="2">
    <citation type="journal article" date="2007" name="Mol. Cell. Proteomics">
        <title>Proteomics reveals N-linked glycoprotein diversity in Caenorhabditis elegans and suggests an atypical translocation mechanism for integral membrane proteins.</title>
        <authorList>
            <person name="Kaji H."/>
            <person name="Kamiie J."/>
            <person name="Kawakami H."/>
            <person name="Kido K."/>
            <person name="Yamauchi Y."/>
            <person name="Shinkawa T."/>
            <person name="Taoka M."/>
            <person name="Takahashi N."/>
            <person name="Isobe T."/>
        </authorList>
    </citation>
    <scope>GLYCOSYLATION [LARGE SCALE ANALYSIS] AT ASN-741 AND ASN-858</scope>
    <scope>IDENTIFICATION BY MASS SPECTROMETRY</scope>
    <source>
        <strain>Bristol N2</strain>
    </source>
</reference>
<reference key="3">
    <citation type="journal article" date="2010" name="Development">
        <title>The C. elegans peroxidasin PXN-2 is essential for embryonic morphogenesis and inhibits adult axon regeneration.</title>
        <authorList>
            <person name="Gotenstein J.R."/>
            <person name="Swale R.E."/>
            <person name="Fukuda T."/>
            <person name="Wu Z."/>
            <person name="Giurumescu C.A."/>
            <person name="Goncharov A."/>
            <person name="Jin Y."/>
            <person name="Chisholm A.D."/>
        </authorList>
    </citation>
    <scope>FUNCTION</scope>
</reference>
<reference key="4">
    <citation type="journal article" date="2015" name="Mol. Cells">
        <title>A role for peroxidasin PXN-1 in aspects of C. elegans development.</title>
        <authorList>
            <person name="Lee J."/>
            <person name="Bandyopadhyay J."/>
            <person name="Lee J.I."/>
            <person name="Cho I."/>
            <person name="Park D."/>
            <person name="Cho J.H."/>
        </authorList>
    </citation>
    <scope>FUNCTION</scope>
    <scope>SUBCELLULAR LOCATION</scope>
    <scope>TISSUE SPECIFICITY</scope>
    <scope>DEVELOPMENTAL STAGE</scope>
</reference>
<reference key="5">
    <citation type="journal article" date="2015" name="Mol. Cells">
        <title>pxn-1 and pxn-2 May Interact Negatively during Neuronal Development and Aging in C. elegans.</title>
        <authorList>
            <person name="Cho I."/>
            <person name="Hwang G.J."/>
            <person name="Cho J.H."/>
        </authorList>
    </citation>
    <scope>FUNCTION</scope>
</reference>
<comment type="function">
    <text evidence="1 8 9 10">Catalyzes the two-electron oxidation of bromide by hydrogen peroxide and generates hypobromite as a reactive intermediate which mediates the formation of sulfilimine cross-links between methionine and hydroxylysine residues within an uncross-linked collagen IV NC1 hexamer (By similarity). Plays a role in the attachment of tissues and in axonal guidance during early developmental stages (PubMed:25475546). May functionally antagonize the peroxidasin pxn-2 to maintain neuronal development (PubMed:20876652, PubMed:26194821).</text>
</comment>
<comment type="catalytic activity">
    <reaction evidence="1">
        <text>L-lysyl-[collagen] + L-methionyl-[collagen] + H2O2 = [collagen]-L-lysyl-N-S-L-methionyl-[collagen] + 2 H2O + H(+)</text>
        <dbReference type="Rhea" id="RHEA:66020"/>
        <dbReference type="Rhea" id="RHEA-COMP:12751"/>
        <dbReference type="Rhea" id="RHEA-COMP:16949"/>
        <dbReference type="Rhea" id="RHEA-COMP:16951"/>
        <dbReference type="ChEBI" id="CHEBI:15377"/>
        <dbReference type="ChEBI" id="CHEBI:15378"/>
        <dbReference type="ChEBI" id="CHEBI:16044"/>
        <dbReference type="ChEBI" id="CHEBI:16240"/>
        <dbReference type="ChEBI" id="CHEBI:29969"/>
        <dbReference type="ChEBI" id="CHEBI:166867"/>
    </reaction>
    <physiologicalReaction direction="left-to-right" evidence="1">
        <dbReference type="Rhea" id="RHEA:66021"/>
    </physiologicalReaction>
</comment>
<comment type="catalytic activity">
    <reaction evidence="1">
        <text>bromide + H2O2 = hypobromite + H2O</text>
        <dbReference type="Rhea" id="RHEA:66016"/>
        <dbReference type="ChEBI" id="CHEBI:15377"/>
        <dbReference type="ChEBI" id="CHEBI:15858"/>
        <dbReference type="ChEBI" id="CHEBI:16240"/>
        <dbReference type="ChEBI" id="CHEBI:29250"/>
    </reaction>
    <physiologicalReaction direction="left-to-right" evidence="1">
        <dbReference type="Rhea" id="RHEA:66017"/>
    </physiologicalReaction>
</comment>
<comment type="catalytic activity">
    <reaction evidence="1">
        <text>L-lysyl-[collagen] + L-methionyl-[collagen] + hypobromite = [collagen]-L-lysyl-N-S-L-methionyl-[collagen] + bromide + H2O + H(+)</text>
        <dbReference type="Rhea" id="RHEA:66024"/>
        <dbReference type="Rhea" id="RHEA-COMP:12751"/>
        <dbReference type="Rhea" id="RHEA-COMP:16949"/>
        <dbReference type="Rhea" id="RHEA-COMP:16951"/>
        <dbReference type="ChEBI" id="CHEBI:15377"/>
        <dbReference type="ChEBI" id="CHEBI:15378"/>
        <dbReference type="ChEBI" id="CHEBI:15858"/>
        <dbReference type="ChEBI" id="CHEBI:16044"/>
        <dbReference type="ChEBI" id="CHEBI:29250"/>
        <dbReference type="ChEBI" id="CHEBI:29969"/>
        <dbReference type="ChEBI" id="CHEBI:166867"/>
    </reaction>
    <physiologicalReaction direction="left-to-right" evidence="1">
        <dbReference type="Rhea" id="RHEA:66025"/>
    </physiologicalReaction>
</comment>
<comment type="catalytic activity">
    <reaction evidence="1">
        <text>L-tyrosyl-[protein] + bromide + H2O2 + H(+) = 3-bromo-L-tyrosyl-[protein] + 2 H2O</text>
        <dbReference type="Rhea" id="RHEA:69360"/>
        <dbReference type="Rhea" id="RHEA-COMP:10136"/>
        <dbReference type="Rhea" id="RHEA-COMP:17686"/>
        <dbReference type="ChEBI" id="CHEBI:15377"/>
        <dbReference type="ChEBI" id="CHEBI:15378"/>
        <dbReference type="ChEBI" id="CHEBI:15858"/>
        <dbReference type="ChEBI" id="CHEBI:16240"/>
        <dbReference type="ChEBI" id="CHEBI:46858"/>
        <dbReference type="ChEBI" id="CHEBI:183512"/>
    </reaction>
    <physiologicalReaction direction="left-to-right" evidence="1">
        <dbReference type="Rhea" id="RHEA:69361"/>
    </physiologicalReaction>
</comment>
<comment type="catalytic activity">
    <reaction evidence="1">
        <text>hypobromite + L-tyrosyl-[protein] + H(+) = 3-bromo-L-tyrosyl-[protein] + H2O</text>
        <dbReference type="Rhea" id="RHEA:69356"/>
        <dbReference type="Rhea" id="RHEA-COMP:10136"/>
        <dbReference type="Rhea" id="RHEA-COMP:17686"/>
        <dbReference type="ChEBI" id="CHEBI:15377"/>
        <dbReference type="ChEBI" id="CHEBI:15378"/>
        <dbReference type="ChEBI" id="CHEBI:29250"/>
        <dbReference type="ChEBI" id="CHEBI:46858"/>
        <dbReference type="ChEBI" id="CHEBI:183512"/>
    </reaction>
    <physiologicalReaction direction="left-to-right" evidence="1">
        <dbReference type="Rhea" id="RHEA:69357"/>
    </physiologicalReaction>
</comment>
<comment type="cofactor">
    <cofactor evidence="4">
        <name>Ca(2+)</name>
        <dbReference type="ChEBI" id="CHEBI:29108"/>
    </cofactor>
    <text evidence="4">Binds 1 Ca(2+) ion per subunit.</text>
</comment>
<comment type="cofactor">
    <cofactor evidence="4">
        <name>heme b</name>
        <dbReference type="ChEBI" id="CHEBI:60344"/>
    </cofactor>
    <text evidence="4">Binds 1 heme b (iron(II)-protoporphyrin IX) group covalently per subunit.</text>
</comment>
<comment type="subcellular location">
    <subcellularLocation>
        <location evidence="9">Secreted</location>
        <location evidence="9">Extracellular space</location>
        <location evidence="9">Extracellular matrix</location>
    </subcellularLocation>
    <text evidence="9">Localizes to the extracellular space in between body wall muscle cells.</text>
</comment>
<comment type="tissue specificity">
    <text evidence="8 9">Expressed in the ventral nerve cord, the dorsal nerve cord, head neurons, GABAergic and cholinergic neurons, body wall muscles, vulval muscles, uterine muscles, intestine, the hypodermis and in coelomocytes.</text>
</comment>
<comment type="developmental stage">
    <text evidence="9">Expressed from embryogenesis to adulthood.</text>
</comment>
<comment type="similarity">
    <text evidence="4">Belongs to the peroxidase family. XPO subfamily.</text>
</comment>
<proteinExistence type="evidence at protein level"/>
<keyword id="KW-0106">Calcium</keyword>
<keyword id="KW-0175">Coiled coil</keyword>
<keyword id="KW-1015">Disulfide bond</keyword>
<keyword id="KW-0272">Extracellular matrix</keyword>
<keyword id="KW-0325">Glycoprotein</keyword>
<keyword id="KW-0349">Heme</keyword>
<keyword id="KW-0376">Hydrogen peroxide</keyword>
<keyword id="KW-0393">Immunoglobulin domain</keyword>
<keyword id="KW-0408">Iron</keyword>
<keyword id="KW-0433">Leucine-rich repeat</keyword>
<keyword id="KW-0479">Metal-binding</keyword>
<keyword id="KW-0560">Oxidoreductase</keyword>
<keyword id="KW-0575">Peroxidase</keyword>
<keyword id="KW-1185">Reference proteome</keyword>
<keyword id="KW-0677">Repeat</keyword>
<keyword id="KW-0964">Secreted</keyword>
<keyword id="KW-0732">Signal</keyword>
<accession>Q1ENI8</accession>
<evidence type="ECO:0000250" key="1">
    <source>
        <dbReference type="UniProtKB" id="Q92626"/>
    </source>
</evidence>
<evidence type="ECO:0000255" key="2"/>
<evidence type="ECO:0000255" key="3">
    <source>
        <dbReference type="PROSITE-ProRule" id="PRU00114"/>
    </source>
</evidence>
<evidence type="ECO:0000255" key="4">
    <source>
        <dbReference type="PROSITE-ProRule" id="PRU00298"/>
    </source>
</evidence>
<evidence type="ECO:0000255" key="5">
    <source>
        <dbReference type="PROSITE-ProRule" id="PRU00498"/>
    </source>
</evidence>
<evidence type="ECO:0000256" key="6">
    <source>
        <dbReference type="SAM" id="MobiDB-lite"/>
    </source>
</evidence>
<evidence type="ECO:0000269" key="7">
    <source>
    </source>
</evidence>
<evidence type="ECO:0000269" key="8">
    <source>
    </source>
</evidence>
<evidence type="ECO:0000269" key="9">
    <source>
    </source>
</evidence>
<evidence type="ECO:0000269" key="10">
    <source>
    </source>
</evidence>
<evidence type="ECO:0000305" key="11"/>
<evidence type="ECO:0000312" key="12">
    <source>
        <dbReference type="WormBase" id="ZK994.3"/>
    </source>
</evidence>
<feature type="signal peptide" evidence="2">
    <location>
        <begin position="1"/>
        <end position="20"/>
    </location>
</feature>
<feature type="chain" id="PRO_0000319623" description="Peroxidasin homolog pxn-1">
    <location>
        <begin position="21"/>
        <end position="1285"/>
    </location>
</feature>
<feature type="domain" description="LRRNT">
    <location>
        <begin position="21"/>
        <end position="53"/>
    </location>
</feature>
<feature type="repeat" description="LRR 1" evidence="2">
    <location>
        <begin position="27"/>
        <end position="49"/>
    </location>
</feature>
<feature type="repeat" description="LRR 2" evidence="2">
    <location>
        <begin position="50"/>
        <end position="72"/>
    </location>
</feature>
<feature type="repeat" description="LRR 3" evidence="2">
    <location>
        <begin position="73"/>
        <end position="96"/>
    </location>
</feature>
<feature type="repeat" description="LRR 4" evidence="2">
    <location>
        <begin position="97"/>
        <end position="120"/>
    </location>
</feature>
<feature type="repeat" description="LRR 5" evidence="2">
    <location>
        <begin position="122"/>
        <end position="143"/>
    </location>
</feature>
<feature type="repeat" description="LRR 6" evidence="2">
    <location>
        <begin position="145"/>
        <end position="168"/>
    </location>
</feature>
<feature type="domain" description="LRRCT" evidence="2">
    <location>
        <begin position="180"/>
        <end position="228"/>
    </location>
</feature>
<feature type="repeat" description="LRR 7" evidence="2">
    <location>
        <begin position="204"/>
        <end position="227"/>
    </location>
</feature>
<feature type="domain" description="Ig-like C2-type 1" evidence="3">
    <location>
        <begin position="315"/>
        <end position="401"/>
    </location>
</feature>
<feature type="domain" description="Ig-like C2-type 2" evidence="3">
    <location>
        <begin position="408"/>
        <end position="495"/>
    </location>
</feature>
<feature type="repeat" description="LRR 10" evidence="2">
    <location>
        <begin position="998"/>
        <end position="1022"/>
    </location>
</feature>
<feature type="repeat" description="LRR 11" evidence="2">
    <location>
        <begin position="1049"/>
        <end position="1073"/>
    </location>
</feature>
<feature type="repeat" description="LRR 12" evidence="2">
    <location>
        <begin position="1168"/>
        <end position="1189"/>
    </location>
</feature>
<feature type="region of interest" description="Disordered" evidence="6">
    <location>
        <begin position="305"/>
        <end position="324"/>
    </location>
</feature>
<feature type="coiled-coil region" evidence="2">
    <location>
        <begin position="508"/>
        <end position="550"/>
    </location>
</feature>
<feature type="compositionally biased region" description="Polar residues" evidence="6">
    <location>
        <begin position="307"/>
        <end position="317"/>
    </location>
</feature>
<feature type="active site" description="Proton acceptor" evidence="4">
    <location>
        <position position="720"/>
    </location>
</feature>
<feature type="binding site" description="covalent" evidence="4">
    <location>
        <position position="719"/>
    </location>
    <ligand>
        <name>heme b</name>
        <dbReference type="ChEBI" id="CHEBI:60344"/>
    </ligand>
</feature>
<feature type="binding site" evidence="4">
    <location>
        <position position="721"/>
    </location>
    <ligand>
        <name>Ca(2+)</name>
        <dbReference type="ChEBI" id="CHEBI:29108"/>
    </ligand>
</feature>
<feature type="binding site" evidence="4">
    <location>
        <position position="803"/>
    </location>
    <ligand>
        <name>Ca(2+)</name>
        <dbReference type="ChEBI" id="CHEBI:29108"/>
    </ligand>
</feature>
<feature type="binding site" evidence="4">
    <location>
        <position position="805"/>
    </location>
    <ligand>
        <name>Ca(2+)</name>
        <dbReference type="ChEBI" id="CHEBI:29108"/>
    </ligand>
</feature>
<feature type="binding site" evidence="4">
    <location>
        <position position="807"/>
    </location>
    <ligand>
        <name>Ca(2+)</name>
        <dbReference type="ChEBI" id="CHEBI:29108"/>
    </ligand>
</feature>
<feature type="binding site" evidence="4">
    <location>
        <position position="809"/>
    </location>
    <ligand>
        <name>Ca(2+)</name>
        <dbReference type="ChEBI" id="CHEBI:29108"/>
    </ligand>
</feature>
<feature type="binding site" description="covalent" evidence="4">
    <location>
        <position position="877"/>
    </location>
    <ligand>
        <name>heme b</name>
        <dbReference type="ChEBI" id="CHEBI:60344"/>
    </ligand>
</feature>
<feature type="binding site" description="axial binding residue" evidence="4">
    <location>
        <position position="973"/>
    </location>
    <ligand>
        <name>heme b</name>
        <dbReference type="ChEBI" id="CHEBI:60344"/>
    </ligand>
    <ligandPart>
        <name>Fe</name>
        <dbReference type="ChEBI" id="CHEBI:18248"/>
    </ligandPart>
</feature>
<feature type="site" description="Transition state stabilizer" evidence="4">
    <location>
        <position position="874"/>
    </location>
</feature>
<feature type="glycosylation site" description="N-linked (GlcNAc...) asparagine" evidence="5">
    <location>
        <position position="49"/>
    </location>
</feature>
<feature type="glycosylation site" description="N-linked (GlcNAc...) asparagine" evidence="5">
    <location>
        <position position="248"/>
    </location>
</feature>
<feature type="glycosylation site" description="N-linked (GlcNAc...) asparagine" evidence="5">
    <location>
        <position position="595"/>
    </location>
</feature>
<feature type="glycosylation site" description="N-linked (GlcNAc...) asparagine" evidence="5 7">
    <location>
        <position position="741"/>
    </location>
</feature>
<feature type="glycosylation site" description="N-linked (GlcNAc...) asparagine" evidence="5 7">
    <location>
        <position position="858"/>
    </location>
</feature>
<feature type="disulfide bond" evidence="3">
    <location>
        <begin position="336"/>
        <end position="385"/>
    </location>
</feature>
<feature type="disulfide bond" evidence="3">
    <location>
        <begin position="429"/>
        <end position="479"/>
    </location>
</feature>
<feature type="disulfide bond" evidence="4">
    <location>
        <begin position="625"/>
        <end position="641"/>
    </location>
</feature>
<feature type="disulfide bond" evidence="4">
    <location>
        <begin position="740"/>
        <end position="750"/>
    </location>
</feature>
<feature type="disulfide bond" evidence="4">
    <location>
        <begin position="744"/>
        <end position="771"/>
    </location>
</feature>
<feature type="disulfide bond" evidence="4">
    <location>
        <begin position="1076"/>
        <end position="1133"/>
    </location>
</feature>
<feature type="disulfide bond" evidence="4">
    <location>
        <begin position="1174"/>
        <end position="1201"/>
    </location>
</feature>
<protein>
    <recommendedName>
        <fullName evidence="11">Peroxidasin homolog pxn-1</fullName>
        <ecNumber evidence="1">1.11.2.-</ecNumber>
    </recommendedName>
</protein>
<sequence length="1285" mass="146337">MNLYLLLLVIATSSWQFVAGLECPVECTCDKKGLVVDCSSSGLTRIPKNISRNVRSLVIRNNRIHKLKRSDLEGFNQLETLVLTHNKIKIIEENVLDHLPELKRLSLAHNELVYIPPLCSDSRPLASLNLKRNHIQFIDEQVLRYFPDLTQLDFSHNRIQSLRTKLFDNLPALSHAHLHSNPWHCDCRASKVKALLQKVKWEKKVYCTNPVELRHQALDEVDDSALTCARPAEESWTGEEIKLTCAKNSSSKLVVWMYENVEVDSSSLDGYEIHDTVITVPRKTNVNFMTCTYDFDHIPHHRRLRQSQHQGNGSPQFTYKPRDNSFREGSEVKVNCEVMGNPKPTINWYHNGKRFISSRKRQLGLSNNVLRIYPFLEEDSGRYTCEAVNSVGKVRHAFSLDLISSVPPNIYEGPQSVSQNLGGSVVFVCKANGNPVPDYTWSFDGSTIGHIKGRFMVSDDGTELRISNIEKKDEGYYSCMAGNPVGAMSADAKLTVIGGETRKAAAPQIDEELLRAIAQKARQNVENAVEKTRKQLTQDKVTNTNDLKRLFRFSTPKQAVELSKAREIYEESVRLVREHVEKGLILNVDELHPKNVSYESVLHVTHVQALMGLSGCHTGQYKNPCTDTCFHHRYRSFDGQCNNKNKPMTGVSLMPLRRLLKPVYENGFNTPVGWEKGRLYNGYPLPNVREVSRQLVATENITPHSKLSSMVMQWGQFVDHDLTHTVTALSRHSYATGAFCNRTCENLDPCFNIPLSPNDPRVKSGSAKYPCIEFERSAAVCGSGETSLVFNRVTYREQMNALTSFLDASNVYGSNEVQAQELRDTYNNNGMLRFDITSEAGKEYLPFEKDSNMDCRRNFSEENPIRCFLAGDLRANEQLALAATHTIFIREHNRIAKKLKSMNGNWDGEIIYHETRKIVGAMMQHITYKHWMPIIFGGQAQMNKFVGTYQGYDPDVDASVTNAFATAAFRFGHTIINPSLFRLGNDFMPIKEGHIALHKAFFTPELVLTQGGVDPLLRGLFASPLKHPMPTQLLNMELIEKLFMKGHEVSLDLAVMNIQRSRDHGLPSYTEYRKFCNLPVPVQWEDMKGYIKDDMIIQKLRGLYGVPQNIDLWVGGIVEEKLENGLFGPTFACIIGEQFRKIRDGDRFWYEKDGVFTPEQLREIKKITLARLFCDNGDNIDRIQKDVFMYPGMDKENYGTCQETEMMNLRAWSKCCDNVCPTMLDRILRSRHRGSRLHGCNQNGIWRPEGAKWIPQNEICTECVCQGSRVWCSTKEDCSDNRSPF</sequence>